<protein>
    <recommendedName>
        <fullName>Imidazole glycerol phosphate synthase subunit HisH</fullName>
        <ecNumber>4.3.2.10</ecNumber>
    </recommendedName>
    <alternativeName>
        <fullName>IGP synthase glutaminase subunit</fullName>
        <ecNumber>3.5.1.2</ecNumber>
    </alternativeName>
    <alternativeName>
        <fullName>IGP synthase subunit HisH</fullName>
    </alternativeName>
    <alternativeName>
        <fullName>ImGP synthase subunit HisH</fullName>
        <shortName>IGPS subunit HisH</shortName>
    </alternativeName>
</protein>
<gene>
    <name type="primary">hisH</name>
    <name type="synonym">hisH2</name>
    <name type="ordered locus">rrnAC2794</name>
</gene>
<organism>
    <name type="scientific">Haloarcula marismortui (strain ATCC 43049 / DSM 3752 / JCM 8966 / VKM B-1809)</name>
    <name type="common">Halobacterium marismortui</name>
    <dbReference type="NCBI Taxonomy" id="272569"/>
    <lineage>
        <taxon>Archaea</taxon>
        <taxon>Methanobacteriati</taxon>
        <taxon>Methanobacteriota</taxon>
        <taxon>Stenosarchaea group</taxon>
        <taxon>Halobacteria</taxon>
        <taxon>Halobacteriales</taxon>
        <taxon>Haloarculaceae</taxon>
        <taxon>Haloarcula</taxon>
    </lineage>
</organism>
<name>HIS5_HALMA</name>
<feature type="chain" id="PRO_0000152455" description="Imidazole glycerol phosphate synthase subunit HisH">
    <location>
        <begin position="1"/>
        <end position="232"/>
    </location>
</feature>
<feature type="domain" description="Glutamine amidotransferase type-1">
    <location>
        <begin position="9"/>
        <end position="232"/>
    </location>
</feature>
<feature type="region of interest" description="Insert">
    <location>
        <begin position="143"/>
        <end position="159"/>
    </location>
</feature>
<feature type="active site" description="Nucleophile" evidence="1">
    <location>
        <position position="85"/>
    </location>
</feature>
<feature type="active site" evidence="1">
    <location>
        <position position="210"/>
    </location>
</feature>
<feature type="active site" evidence="1">
    <location>
        <position position="212"/>
    </location>
</feature>
<accession>Q5UYV3</accession>
<dbReference type="EC" id="4.3.2.10"/>
<dbReference type="EC" id="3.5.1.2"/>
<dbReference type="EMBL" id="AY596297">
    <property type="protein sequence ID" value="AAV47550.1"/>
    <property type="molecule type" value="Genomic_DNA"/>
</dbReference>
<dbReference type="RefSeq" id="WP_011224435.1">
    <property type="nucleotide sequence ID" value="NC_006396.1"/>
</dbReference>
<dbReference type="SMR" id="Q5UYV3"/>
<dbReference type="STRING" id="272569.rrnAC2794"/>
<dbReference type="PaxDb" id="272569-rrnAC2794"/>
<dbReference type="EnsemblBacteria" id="AAV47550">
    <property type="protein sequence ID" value="AAV47550"/>
    <property type="gene ID" value="rrnAC2794"/>
</dbReference>
<dbReference type="GeneID" id="40153647"/>
<dbReference type="KEGG" id="hma:rrnAC2794"/>
<dbReference type="PATRIC" id="fig|272569.17.peg.3368"/>
<dbReference type="eggNOG" id="arCOG00089">
    <property type="taxonomic scope" value="Archaea"/>
</dbReference>
<dbReference type="HOGENOM" id="CLU_071837_2_1_2"/>
<dbReference type="UniPathway" id="UPA00031">
    <property type="reaction ID" value="UER00010"/>
</dbReference>
<dbReference type="Proteomes" id="UP000001169">
    <property type="component" value="Chromosome I"/>
</dbReference>
<dbReference type="GO" id="GO:0005737">
    <property type="term" value="C:cytoplasm"/>
    <property type="evidence" value="ECO:0007669"/>
    <property type="project" value="UniProtKB-SubCell"/>
</dbReference>
<dbReference type="GO" id="GO:0004359">
    <property type="term" value="F:glutaminase activity"/>
    <property type="evidence" value="ECO:0007669"/>
    <property type="project" value="UniProtKB-EC"/>
</dbReference>
<dbReference type="GO" id="GO:0000107">
    <property type="term" value="F:imidazoleglycerol-phosphate synthase activity"/>
    <property type="evidence" value="ECO:0007669"/>
    <property type="project" value="UniProtKB-UniRule"/>
</dbReference>
<dbReference type="GO" id="GO:0016829">
    <property type="term" value="F:lyase activity"/>
    <property type="evidence" value="ECO:0007669"/>
    <property type="project" value="UniProtKB-KW"/>
</dbReference>
<dbReference type="GO" id="GO:0000105">
    <property type="term" value="P:L-histidine biosynthetic process"/>
    <property type="evidence" value="ECO:0007669"/>
    <property type="project" value="UniProtKB-UniRule"/>
</dbReference>
<dbReference type="CDD" id="cd01748">
    <property type="entry name" value="GATase1_IGP_Synthase"/>
    <property type="match status" value="1"/>
</dbReference>
<dbReference type="Gene3D" id="3.40.50.880">
    <property type="match status" value="1"/>
</dbReference>
<dbReference type="HAMAP" id="MF_00278">
    <property type="entry name" value="HisH"/>
    <property type="match status" value="1"/>
</dbReference>
<dbReference type="InterPro" id="IPR029062">
    <property type="entry name" value="Class_I_gatase-like"/>
</dbReference>
<dbReference type="InterPro" id="IPR017926">
    <property type="entry name" value="GATASE"/>
</dbReference>
<dbReference type="InterPro" id="IPR010139">
    <property type="entry name" value="Imidazole-glycPsynth_HisH"/>
</dbReference>
<dbReference type="NCBIfam" id="TIGR01855">
    <property type="entry name" value="IMP_synth_hisH"/>
    <property type="match status" value="1"/>
</dbReference>
<dbReference type="PANTHER" id="PTHR42701">
    <property type="entry name" value="IMIDAZOLE GLYCEROL PHOSPHATE SYNTHASE SUBUNIT HISH"/>
    <property type="match status" value="1"/>
</dbReference>
<dbReference type="PANTHER" id="PTHR42701:SF1">
    <property type="entry name" value="IMIDAZOLE GLYCEROL PHOSPHATE SYNTHASE SUBUNIT HISH"/>
    <property type="match status" value="1"/>
</dbReference>
<dbReference type="Pfam" id="PF00117">
    <property type="entry name" value="GATase"/>
    <property type="match status" value="1"/>
</dbReference>
<dbReference type="PIRSF" id="PIRSF000495">
    <property type="entry name" value="Amidotransf_hisH"/>
    <property type="match status" value="1"/>
</dbReference>
<dbReference type="SUPFAM" id="SSF52317">
    <property type="entry name" value="Class I glutamine amidotransferase-like"/>
    <property type="match status" value="1"/>
</dbReference>
<dbReference type="PROSITE" id="PS51273">
    <property type="entry name" value="GATASE_TYPE_1"/>
    <property type="match status" value="1"/>
</dbReference>
<evidence type="ECO:0000250" key="1"/>
<sequence>MSVRQTTADVVVVDYGLGNLRSVTRGLERAGANVSLSEDPAEFDAADGIVLPGVGAFSEGMDNAGPFREALVEQAEAGKPLFGICLGMQMLLTTSEEADHEGQGDAEGLDLIPGKNVRFSRDQTVPHMGWNELDVTRDHPLVEGVDSVGSKTPRADGTGGSVDGEHAYFVHSYYAVPDDESATVATTDYGTDFASIVANDAGNVFGTQFHPEKSGETGLRILRNYVDYCLDH</sequence>
<keyword id="KW-0028">Amino-acid biosynthesis</keyword>
<keyword id="KW-0963">Cytoplasm</keyword>
<keyword id="KW-0315">Glutamine amidotransferase</keyword>
<keyword id="KW-0368">Histidine biosynthesis</keyword>
<keyword id="KW-0378">Hydrolase</keyword>
<keyword id="KW-0456">Lyase</keyword>
<keyword id="KW-1185">Reference proteome</keyword>
<comment type="function">
    <text evidence="1">IGPS catalyzes the conversion of PRFAR and glutamine to IGP, AICAR and glutamate. The HisH subunit catalyzes the hydrolysis of glutamine to glutamate and ammonia as part of the synthesis of IGP and AICAR. The resulting ammonia molecule is channeled to the active site of HisF (By similarity).</text>
</comment>
<comment type="catalytic activity">
    <reaction>
        <text>5-[(5-phospho-1-deoxy-D-ribulos-1-ylimino)methylamino]-1-(5-phospho-beta-D-ribosyl)imidazole-4-carboxamide + L-glutamine = D-erythro-1-(imidazol-4-yl)glycerol 3-phosphate + 5-amino-1-(5-phospho-beta-D-ribosyl)imidazole-4-carboxamide + L-glutamate + H(+)</text>
        <dbReference type="Rhea" id="RHEA:24793"/>
        <dbReference type="ChEBI" id="CHEBI:15378"/>
        <dbReference type="ChEBI" id="CHEBI:29985"/>
        <dbReference type="ChEBI" id="CHEBI:58278"/>
        <dbReference type="ChEBI" id="CHEBI:58359"/>
        <dbReference type="ChEBI" id="CHEBI:58475"/>
        <dbReference type="ChEBI" id="CHEBI:58525"/>
        <dbReference type="EC" id="4.3.2.10"/>
    </reaction>
</comment>
<comment type="catalytic activity">
    <reaction>
        <text>L-glutamine + H2O = L-glutamate + NH4(+)</text>
        <dbReference type="Rhea" id="RHEA:15889"/>
        <dbReference type="ChEBI" id="CHEBI:15377"/>
        <dbReference type="ChEBI" id="CHEBI:28938"/>
        <dbReference type="ChEBI" id="CHEBI:29985"/>
        <dbReference type="ChEBI" id="CHEBI:58359"/>
        <dbReference type="EC" id="3.5.1.2"/>
    </reaction>
</comment>
<comment type="pathway">
    <text>Amino-acid biosynthesis; L-histidine biosynthesis; L-histidine from 5-phospho-alpha-D-ribose 1-diphosphate: step 5/9.</text>
</comment>
<comment type="subunit">
    <text evidence="1">Heterodimer of HisH and HisF.</text>
</comment>
<comment type="subcellular location">
    <subcellularLocation>
        <location evidence="1">Cytoplasm</location>
    </subcellularLocation>
</comment>
<reference key="1">
    <citation type="journal article" date="2004" name="Genome Res.">
        <title>Genome sequence of Haloarcula marismortui: a halophilic archaeon from the Dead Sea.</title>
        <authorList>
            <person name="Baliga N.S."/>
            <person name="Bonneau R."/>
            <person name="Facciotti M.T."/>
            <person name="Pan M."/>
            <person name="Glusman G."/>
            <person name="Deutsch E.W."/>
            <person name="Shannon P."/>
            <person name="Chiu Y."/>
            <person name="Weng R.S."/>
            <person name="Gan R.R."/>
            <person name="Hung P."/>
            <person name="Date S.V."/>
            <person name="Marcotte E."/>
            <person name="Hood L."/>
            <person name="Ng W.V."/>
        </authorList>
    </citation>
    <scope>NUCLEOTIDE SEQUENCE [LARGE SCALE GENOMIC DNA]</scope>
    <source>
        <strain>ATCC 43049 / DSM 3752 / JCM 8966 / VKM B-1809</strain>
    </source>
</reference>
<proteinExistence type="inferred from homology"/>